<dbReference type="EMBL" id="BX571856">
    <property type="protein sequence ID" value="CAG39123.1"/>
    <property type="molecule type" value="Genomic_DNA"/>
</dbReference>
<dbReference type="RefSeq" id="WP_000414485.1">
    <property type="nucleotide sequence ID" value="NC_002952.2"/>
</dbReference>
<dbReference type="SMR" id="Q6GKL1"/>
<dbReference type="KEGG" id="sar:SAR0097"/>
<dbReference type="HOGENOM" id="CLU_069356_17_2_9"/>
<dbReference type="Proteomes" id="UP000000596">
    <property type="component" value="Chromosome"/>
</dbReference>
<dbReference type="GO" id="GO:0003677">
    <property type="term" value="F:DNA binding"/>
    <property type="evidence" value="ECO:0007669"/>
    <property type="project" value="UniProtKB-KW"/>
</dbReference>
<dbReference type="Gene3D" id="1.10.357.10">
    <property type="entry name" value="Tetracycline Repressor, domain 2"/>
    <property type="match status" value="1"/>
</dbReference>
<dbReference type="InterPro" id="IPR009057">
    <property type="entry name" value="Homeodomain-like_sf"/>
</dbReference>
<dbReference type="InterPro" id="IPR050624">
    <property type="entry name" value="HTH-type_Tx_Regulator"/>
</dbReference>
<dbReference type="InterPro" id="IPR001647">
    <property type="entry name" value="HTH_TetR"/>
</dbReference>
<dbReference type="PANTHER" id="PTHR43479">
    <property type="entry name" value="ACREF/ENVCD OPERON REPRESSOR-RELATED"/>
    <property type="match status" value="1"/>
</dbReference>
<dbReference type="PANTHER" id="PTHR43479:SF11">
    <property type="entry name" value="ACREF_ENVCD OPERON REPRESSOR-RELATED"/>
    <property type="match status" value="1"/>
</dbReference>
<dbReference type="Pfam" id="PF00440">
    <property type="entry name" value="TetR_N"/>
    <property type="match status" value="1"/>
</dbReference>
<dbReference type="SUPFAM" id="SSF46689">
    <property type="entry name" value="Homeodomain-like"/>
    <property type="match status" value="1"/>
</dbReference>
<dbReference type="PROSITE" id="PS50977">
    <property type="entry name" value="HTH_TETR_2"/>
    <property type="match status" value="1"/>
</dbReference>
<protein>
    <recommendedName>
        <fullName>HTH-type transcriptional regulator SAR0097</fullName>
    </recommendedName>
</protein>
<proteinExistence type="predicted"/>
<feature type="chain" id="PRO_0000286698" description="HTH-type transcriptional regulator SAR0097">
    <location>
        <begin position="1"/>
        <end position="191"/>
    </location>
</feature>
<feature type="domain" description="HTH tetR-type" evidence="1">
    <location>
        <begin position="12"/>
        <end position="74"/>
    </location>
</feature>
<feature type="DNA-binding region" description="H-T-H motif" evidence="1">
    <location>
        <begin position="37"/>
        <end position="56"/>
    </location>
</feature>
<evidence type="ECO:0000255" key="1">
    <source>
        <dbReference type="PROSITE-ProRule" id="PRU00335"/>
    </source>
</evidence>
<gene>
    <name type="ordered locus">SAR0097</name>
</gene>
<sequence length="191" mass="22399">MEKNQRKKRSDAEYNQQIILTTMEDLLEQGEDISTKKMSDIAKISGVGVGTLYRHFESKTLLCQAIMDKKVDQMFIEIEDILAENTQWPVRDKINVILTKYLDLKEANFTTLNFIEKSSSHSSSVINIPFFERLKNLLIQQFENVHSIADLDFKLNLMLNAFSSDFYYFVKHNQKLTKQQFLDKLLDLYLK</sequence>
<organism>
    <name type="scientific">Staphylococcus aureus (strain MRSA252)</name>
    <dbReference type="NCBI Taxonomy" id="282458"/>
    <lineage>
        <taxon>Bacteria</taxon>
        <taxon>Bacillati</taxon>
        <taxon>Bacillota</taxon>
        <taxon>Bacilli</taxon>
        <taxon>Bacillales</taxon>
        <taxon>Staphylococcaceae</taxon>
        <taxon>Staphylococcus</taxon>
    </lineage>
</organism>
<name>Y097_STAAR</name>
<keyword id="KW-0238">DNA-binding</keyword>
<keyword id="KW-0804">Transcription</keyword>
<keyword id="KW-0805">Transcription regulation</keyword>
<accession>Q6GKL1</accession>
<reference key="1">
    <citation type="journal article" date="2004" name="Proc. Natl. Acad. Sci. U.S.A.">
        <title>Complete genomes of two clinical Staphylococcus aureus strains: evidence for the rapid evolution of virulence and drug resistance.</title>
        <authorList>
            <person name="Holden M.T.G."/>
            <person name="Feil E.J."/>
            <person name="Lindsay J.A."/>
            <person name="Peacock S.J."/>
            <person name="Day N.P.J."/>
            <person name="Enright M.C."/>
            <person name="Foster T.J."/>
            <person name="Moore C.E."/>
            <person name="Hurst L."/>
            <person name="Atkin R."/>
            <person name="Barron A."/>
            <person name="Bason N."/>
            <person name="Bentley S.D."/>
            <person name="Chillingworth C."/>
            <person name="Chillingworth T."/>
            <person name="Churcher C."/>
            <person name="Clark L."/>
            <person name="Corton C."/>
            <person name="Cronin A."/>
            <person name="Doggett J."/>
            <person name="Dowd L."/>
            <person name="Feltwell T."/>
            <person name="Hance Z."/>
            <person name="Harris B."/>
            <person name="Hauser H."/>
            <person name="Holroyd S."/>
            <person name="Jagels K."/>
            <person name="James K.D."/>
            <person name="Lennard N."/>
            <person name="Line A."/>
            <person name="Mayes R."/>
            <person name="Moule S."/>
            <person name="Mungall K."/>
            <person name="Ormond D."/>
            <person name="Quail M.A."/>
            <person name="Rabbinowitsch E."/>
            <person name="Rutherford K.M."/>
            <person name="Sanders M."/>
            <person name="Sharp S."/>
            <person name="Simmonds M."/>
            <person name="Stevens K."/>
            <person name="Whitehead S."/>
            <person name="Barrell B.G."/>
            <person name="Spratt B.G."/>
            <person name="Parkhill J."/>
        </authorList>
    </citation>
    <scope>NUCLEOTIDE SEQUENCE [LARGE SCALE GENOMIC DNA]</scope>
    <source>
        <strain>MRSA252</strain>
    </source>
</reference>